<name>RL4_GLUOX</name>
<organism>
    <name type="scientific">Gluconobacter oxydans (strain 621H)</name>
    <name type="common">Gluconobacter suboxydans</name>
    <dbReference type="NCBI Taxonomy" id="290633"/>
    <lineage>
        <taxon>Bacteria</taxon>
        <taxon>Pseudomonadati</taxon>
        <taxon>Pseudomonadota</taxon>
        <taxon>Alphaproteobacteria</taxon>
        <taxon>Acetobacterales</taxon>
        <taxon>Acetobacteraceae</taxon>
        <taxon>Gluconobacter</taxon>
    </lineage>
</organism>
<protein>
    <recommendedName>
        <fullName evidence="1">Large ribosomal subunit protein uL4</fullName>
    </recommendedName>
    <alternativeName>
        <fullName evidence="3">50S ribosomal protein L4</fullName>
    </alternativeName>
</protein>
<reference key="1">
    <citation type="journal article" date="2005" name="Nat. Biotechnol.">
        <title>Complete genome sequence of the acetic acid bacterium Gluconobacter oxydans.</title>
        <authorList>
            <person name="Prust C."/>
            <person name="Hoffmeister M."/>
            <person name="Liesegang H."/>
            <person name="Wiezer A."/>
            <person name="Fricke W.F."/>
            <person name="Ehrenreich A."/>
            <person name="Gottschalk G."/>
            <person name="Deppenmeier U."/>
        </authorList>
    </citation>
    <scope>NUCLEOTIDE SEQUENCE [LARGE SCALE GENOMIC DNA]</scope>
    <source>
        <strain>621H</strain>
    </source>
</reference>
<dbReference type="EMBL" id="CP000009">
    <property type="protein sequence ID" value="AAW60162.1"/>
    <property type="molecule type" value="Genomic_DNA"/>
</dbReference>
<dbReference type="RefSeq" id="WP_011251965.1">
    <property type="nucleotide sequence ID" value="NZ_LT900338.1"/>
</dbReference>
<dbReference type="SMR" id="Q5FTY4"/>
<dbReference type="STRING" id="290633.GOX0379"/>
<dbReference type="GeneID" id="56904645"/>
<dbReference type="KEGG" id="gox:GOX0379"/>
<dbReference type="eggNOG" id="COG0088">
    <property type="taxonomic scope" value="Bacteria"/>
</dbReference>
<dbReference type="HOGENOM" id="CLU_041575_5_1_5"/>
<dbReference type="Proteomes" id="UP000006375">
    <property type="component" value="Chromosome"/>
</dbReference>
<dbReference type="GO" id="GO:1990904">
    <property type="term" value="C:ribonucleoprotein complex"/>
    <property type="evidence" value="ECO:0007669"/>
    <property type="project" value="UniProtKB-KW"/>
</dbReference>
<dbReference type="GO" id="GO:0005840">
    <property type="term" value="C:ribosome"/>
    <property type="evidence" value="ECO:0007669"/>
    <property type="project" value="UniProtKB-KW"/>
</dbReference>
<dbReference type="GO" id="GO:0019843">
    <property type="term" value="F:rRNA binding"/>
    <property type="evidence" value="ECO:0007669"/>
    <property type="project" value="UniProtKB-UniRule"/>
</dbReference>
<dbReference type="GO" id="GO:0003735">
    <property type="term" value="F:structural constituent of ribosome"/>
    <property type="evidence" value="ECO:0007669"/>
    <property type="project" value="InterPro"/>
</dbReference>
<dbReference type="GO" id="GO:0006412">
    <property type="term" value="P:translation"/>
    <property type="evidence" value="ECO:0007669"/>
    <property type="project" value="UniProtKB-UniRule"/>
</dbReference>
<dbReference type="Gene3D" id="3.40.1370.10">
    <property type="match status" value="1"/>
</dbReference>
<dbReference type="HAMAP" id="MF_01328_B">
    <property type="entry name" value="Ribosomal_uL4_B"/>
    <property type="match status" value="1"/>
</dbReference>
<dbReference type="InterPro" id="IPR002136">
    <property type="entry name" value="Ribosomal_uL4"/>
</dbReference>
<dbReference type="InterPro" id="IPR013005">
    <property type="entry name" value="Ribosomal_uL4-like"/>
</dbReference>
<dbReference type="InterPro" id="IPR023574">
    <property type="entry name" value="Ribosomal_uL4_dom_sf"/>
</dbReference>
<dbReference type="NCBIfam" id="TIGR03953">
    <property type="entry name" value="rplD_bact"/>
    <property type="match status" value="1"/>
</dbReference>
<dbReference type="PANTHER" id="PTHR10746">
    <property type="entry name" value="50S RIBOSOMAL PROTEIN L4"/>
    <property type="match status" value="1"/>
</dbReference>
<dbReference type="PANTHER" id="PTHR10746:SF6">
    <property type="entry name" value="LARGE RIBOSOMAL SUBUNIT PROTEIN UL4M"/>
    <property type="match status" value="1"/>
</dbReference>
<dbReference type="Pfam" id="PF00573">
    <property type="entry name" value="Ribosomal_L4"/>
    <property type="match status" value="1"/>
</dbReference>
<dbReference type="SUPFAM" id="SSF52166">
    <property type="entry name" value="Ribosomal protein L4"/>
    <property type="match status" value="1"/>
</dbReference>
<sequence length="204" mass="21925">MEYDIKTLDNGSAGSVALPEEIFAVTPRSDIMARVVHWQLAKRRAGTHRTKGMGEISGTTKKPYRQKGTGSARQGSLRAPQFRTGGVVHGPVVRDHGYDLPKKVRRLGLICALSQKAAEGKLIVLDAANGVTKTREAAAKIKALGWTSALIVDGAVDEQFARAIANLPKIDVLPTIGANVYDILNHDVLVITRAGLEGLKERLA</sequence>
<feature type="chain" id="PRO_0000242380" description="Large ribosomal subunit protein uL4">
    <location>
        <begin position="1"/>
        <end position="204"/>
    </location>
</feature>
<feature type="region of interest" description="Disordered" evidence="2">
    <location>
        <begin position="44"/>
        <end position="76"/>
    </location>
</feature>
<keyword id="KW-1185">Reference proteome</keyword>
<keyword id="KW-0687">Ribonucleoprotein</keyword>
<keyword id="KW-0689">Ribosomal protein</keyword>
<keyword id="KW-0694">RNA-binding</keyword>
<keyword id="KW-0699">rRNA-binding</keyword>
<accession>Q5FTY4</accession>
<comment type="function">
    <text evidence="1">One of the primary rRNA binding proteins, this protein initially binds near the 5'-end of the 23S rRNA. It is important during the early stages of 50S assembly. It makes multiple contacts with different domains of the 23S rRNA in the assembled 50S subunit and ribosome.</text>
</comment>
<comment type="function">
    <text evidence="1">Forms part of the polypeptide exit tunnel.</text>
</comment>
<comment type="subunit">
    <text evidence="1">Part of the 50S ribosomal subunit.</text>
</comment>
<comment type="similarity">
    <text evidence="1">Belongs to the universal ribosomal protein uL4 family.</text>
</comment>
<proteinExistence type="inferred from homology"/>
<evidence type="ECO:0000255" key="1">
    <source>
        <dbReference type="HAMAP-Rule" id="MF_01328"/>
    </source>
</evidence>
<evidence type="ECO:0000256" key="2">
    <source>
        <dbReference type="SAM" id="MobiDB-lite"/>
    </source>
</evidence>
<evidence type="ECO:0000305" key="3"/>
<gene>
    <name evidence="1" type="primary">rplD</name>
    <name type="ordered locus">GOX0379</name>
</gene>